<name>K2C79_BOVIN</name>
<accession>Q148H7</accession>
<comment type="subunit">
    <text>Heterotetramer of two type I and two type II keratins.</text>
</comment>
<comment type="miscellaneous">
    <text>There are two types of cytoskeletal and microfibrillar keratin, I (acidic) and II (neutral to basic) (40-55 and 56-70 kDa, respectively).</text>
</comment>
<comment type="similarity">
    <text evidence="1">Belongs to the intermediate filament family.</text>
</comment>
<proteinExistence type="evidence at transcript level"/>
<dbReference type="EMBL" id="BC118314">
    <property type="protein sequence ID" value="AAI18315.1"/>
    <property type="molecule type" value="mRNA"/>
</dbReference>
<dbReference type="RefSeq" id="NP_001068816.1">
    <property type="nucleotide sequence ID" value="NM_001075348.1"/>
</dbReference>
<dbReference type="RefSeq" id="XP_024847298.1">
    <property type="nucleotide sequence ID" value="XM_024991530.2"/>
</dbReference>
<dbReference type="SMR" id="Q148H7"/>
<dbReference type="FunCoup" id="Q148H7">
    <property type="interactions" value="54"/>
</dbReference>
<dbReference type="IntAct" id="Q148H7">
    <property type="interactions" value="1"/>
</dbReference>
<dbReference type="STRING" id="9913.ENSBTAP00000016839"/>
<dbReference type="PaxDb" id="9913-ENSBTAP00000016839"/>
<dbReference type="PeptideAtlas" id="Q148H7"/>
<dbReference type="Ensembl" id="ENSBTAT00000131315.1">
    <property type="protein sequence ID" value="ENSBTAP00000075023.1"/>
    <property type="gene ID" value="ENSBTAG00000012676.6"/>
</dbReference>
<dbReference type="GeneID" id="508202"/>
<dbReference type="KEGG" id="bta:508202"/>
<dbReference type="CTD" id="338785"/>
<dbReference type="VGNC" id="VGNC:30741">
    <property type="gene designation" value="KRT79"/>
</dbReference>
<dbReference type="eggNOG" id="ENOG502SPJX">
    <property type="taxonomic scope" value="Eukaryota"/>
</dbReference>
<dbReference type="GeneTree" id="ENSGT00940000161881"/>
<dbReference type="HOGENOM" id="CLU_012560_6_1_1"/>
<dbReference type="InParanoid" id="Q148H7"/>
<dbReference type="OrthoDB" id="2441647at2759"/>
<dbReference type="TreeFam" id="TF317854"/>
<dbReference type="Proteomes" id="UP000009136">
    <property type="component" value="Chromosome 5"/>
</dbReference>
<dbReference type="GO" id="GO:0045095">
    <property type="term" value="C:keratin filament"/>
    <property type="evidence" value="ECO:0000318"/>
    <property type="project" value="GO_Central"/>
</dbReference>
<dbReference type="GO" id="GO:0019899">
    <property type="term" value="F:enzyme binding"/>
    <property type="evidence" value="ECO:0007669"/>
    <property type="project" value="Ensembl"/>
</dbReference>
<dbReference type="GO" id="GO:0030280">
    <property type="term" value="F:structural constituent of skin epidermis"/>
    <property type="evidence" value="ECO:0000318"/>
    <property type="project" value="GO_Central"/>
</dbReference>
<dbReference type="GO" id="GO:0045109">
    <property type="term" value="P:intermediate filament organization"/>
    <property type="evidence" value="ECO:0000318"/>
    <property type="project" value="GO_Central"/>
</dbReference>
<dbReference type="GO" id="GO:0031424">
    <property type="term" value="P:keratinization"/>
    <property type="evidence" value="ECO:0000318"/>
    <property type="project" value="GO_Central"/>
</dbReference>
<dbReference type="FunFam" id="1.20.5.1160:FF:000001">
    <property type="entry name" value="Keratin type II"/>
    <property type="match status" value="1"/>
</dbReference>
<dbReference type="FunFam" id="1.20.5.170:FF:000004">
    <property type="entry name" value="Keratin, type II cytoskeletal 5"/>
    <property type="match status" value="1"/>
</dbReference>
<dbReference type="FunFam" id="1.20.5.500:FF:000001">
    <property type="entry name" value="Type II keratin 23"/>
    <property type="match status" value="1"/>
</dbReference>
<dbReference type="Gene3D" id="1.20.5.170">
    <property type="match status" value="1"/>
</dbReference>
<dbReference type="Gene3D" id="1.20.5.500">
    <property type="entry name" value="Single helix bin"/>
    <property type="match status" value="1"/>
</dbReference>
<dbReference type="Gene3D" id="1.20.5.1160">
    <property type="entry name" value="Vasodilator-stimulated phosphoprotein"/>
    <property type="match status" value="1"/>
</dbReference>
<dbReference type="InterPro" id="IPR018039">
    <property type="entry name" value="IF_conserved"/>
</dbReference>
<dbReference type="InterPro" id="IPR039008">
    <property type="entry name" value="IF_rod_dom"/>
</dbReference>
<dbReference type="InterPro" id="IPR032444">
    <property type="entry name" value="Keratin_2_head"/>
</dbReference>
<dbReference type="InterPro" id="IPR003054">
    <property type="entry name" value="Keratin_II"/>
</dbReference>
<dbReference type="PANTHER" id="PTHR45616">
    <property type="entry name" value="GATA-TYPE DOMAIN-CONTAINING PROTEIN"/>
    <property type="match status" value="1"/>
</dbReference>
<dbReference type="PANTHER" id="PTHR45616:SF10">
    <property type="entry name" value="KERATIN, TYPE II CYTOSKELETAL 79"/>
    <property type="match status" value="1"/>
</dbReference>
<dbReference type="Pfam" id="PF00038">
    <property type="entry name" value="Filament"/>
    <property type="match status" value="1"/>
</dbReference>
<dbReference type="Pfam" id="PF16208">
    <property type="entry name" value="Keratin_2_head"/>
    <property type="match status" value="2"/>
</dbReference>
<dbReference type="PRINTS" id="PR01276">
    <property type="entry name" value="TYPE2KERATIN"/>
</dbReference>
<dbReference type="SMART" id="SM01391">
    <property type="entry name" value="Filament"/>
    <property type="match status" value="1"/>
</dbReference>
<dbReference type="SUPFAM" id="SSF64593">
    <property type="entry name" value="Intermediate filament protein, coiled coil region"/>
    <property type="match status" value="3"/>
</dbReference>
<dbReference type="PROSITE" id="PS00226">
    <property type="entry name" value="IF_ROD_1"/>
    <property type="match status" value="1"/>
</dbReference>
<dbReference type="PROSITE" id="PS51842">
    <property type="entry name" value="IF_ROD_2"/>
    <property type="match status" value="1"/>
</dbReference>
<gene>
    <name type="primary">KRT79</name>
</gene>
<keyword id="KW-0175">Coiled coil</keyword>
<keyword id="KW-0403">Intermediate filament</keyword>
<keyword id="KW-0416">Keratin</keyword>
<keyword id="KW-1185">Reference proteome</keyword>
<feature type="chain" id="PRO_0000314892" description="Keratin, type II cytoskeletal 79">
    <location>
        <begin position="1"/>
        <end position="535"/>
    </location>
</feature>
<feature type="domain" description="IF rod" evidence="1">
    <location>
        <begin position="142"/>
        <end position="457"/>
    </location>
</feature>
<feature type="region of interest" description="Head">
    <location>
        <begin position="1"/>
        <end position="141"/>
    </location>
</feature>
<feature type="region of interest" description="Disordered" evidence="2">
    <location>
        <begin position="1"/>
        <end position="53"/>
    </location>
</feature>
<feature type="region of interest" description="Coil 1A">
    <location>
        <begin position="142"/>
        <end position="177"/>
    </location>
</feature>
<feature type="region of interest" description="Linker 1">
    <location>
        <begin position="178"/>
        <end position="198"/>
    </location>
</feature>
<feature type="region of interest" description="Coil 1B">
    <location>
        <begin position="199"/>
        <end position="290"/>
    </location>
</feature>
<feature type="region of interest" description="Linker 12">
    <location>
        <begin position="291"/>
        <end position="314"/>
    </location>
</feature>
<feature type="region of interest" description="Coil 2">
    <location>
        <begin position="315"/>
        <end position="453"/>
    </location>
</feature>
<feature type="region of interest" description="Tail">
    <location>
        <begin position="454"/>
        <end position="535"/>
    </location>
</feature>
<feature type="compositionally biased region" description="Polar residues" evidence="2">
    <location>
        <begin position="1"/>
        <end position="12"/>
    </location>
</feature>
<feature type="compositionally biased region" description="Polar residues" evidence="2">
    <location>
        <begin position="28"/>
        <end position="38"/>
    </location>
</feature>
<feature type="compositionally biased region" description="Gly residues" evidence="2">
    <location>
        <begin position="43"/>
        <end position="53"/>
    </location>
</feature>
<feature type="site" description="Stutter">
    <location>
        <position position="395"/>
    </location>
</feature>
<evidence type="ECO:0000255" key="1">
    <source>
        <dbReference type="PROSITE-ProRule" id="PRU01188"/>
    </source>
</evidence>
<evidence type="ECO:0000256" key="2">
    <source>
        <dbReference type="SAM" id="MobiDB-lite"/>
    </source>
</evidence>
<organism>
    <name type="scientific">Bos taurus</name>
    <name type="common">Bovine</name>
    <dbReference type="NCBI Taxonomy" id="9913"/>
    <lineage>
        <taxon>Eukaryota</taxon>
        <taxon>Metazoa</taxon>
        <taxon>Chordata</taxon>
        <taxon>Craniata</taxon>
        <taxon>Vertebrata</taxon>
        <taxon>Euteleostomi</taxon>
        <taxon>Mammalia</taxon>
        <taxon>Eutheria</taxon>
        <taxon>Laurasiatheria</taxon>
        <taxon>Artiodactyla</taxon>
        <taxon>Ruminantia</taxon>
        <taxon>Pecora</taxon>
        <taxon>Bovidae</taxon>
        <taxon>Bovinae</taxon>
        <taxon>Bos</taxon>
    </lineage>
</organism>
<reference key="1">
    <citation type="submission" date="2006-06" db="EMBL/GenBank/DDBJ databases">
        <authorList>
            <consortium name="NIH - Mammalian Gene Collection (MGC) project"/>
        </authorList>
    </citation>
    <scope>NUCLEOTIDE SEQUENCE [LARGE SCALE MRNA]</scope>
    <source>
        <strain>Hereford</strain>
        <tissue>Fetal skin</tissue>
    </source>
</reference>
<protein>
    <recommendedName>
        <fullName>Keratin, type II cytoskeletal 79</fullName>
    </recommendedName>
    <alternativeName>
        <fullName>Cytokeratin-79</fullName>
        <shortName>CK-79</shortName>
    </alternativeName>
    <alternativeName>
        <fullName>Keratin-79</fullName>
        <shortName>K79</shortName>
    </alternativeName>
    <alternativeName>
        <fullName>Type-II keratin Kb38</fullName>
    </alternativeName>
</protein>
<sequence>MRSSVSRQTYSTKGAFSSSSASGGGGSQARTSFSSVTVSRNSGRGGGPRCGPSMGGFGSQSLYNLGGSKSISVSVAGGASAGRVLGGFGLGGGAYMGLGACRPMLGPVCPPGGIQQVTVNQSLLTPLHVEIDPEIQRVRTEEREQIKTLNNKFASFIDKVRFLEQQNKVLETKWALLQEQGQKSGVTRNNLEPLFEHFINNLRGKLDNLQSERGRLDSELRNVQDLAEDFKTKYEDEINKRTAAENEFVVLKKDVDAAYVGRMDLHGMVDHLMGEIDFLRHLYEEELSQVQTHVSDTSVILSMDNNRNLDLDSIIAEVKAQYEQIAQRSRAEAESWYQTKYEELQVTAGKHGDNLRDTKNEIAELTRTVQRLQGEADAVKKQCQQLQTAIADAEQHGELALKDAQKKLGDLDAALNQAKEDLARLLRDYQALMNVKLALDVEIATYRKLLESEESRMSGECPSAVSISVTGNSTTVCGGGAAGFGGGISLGGGGGASKGRFSTNAGYSTVKGGPVSGGTSILRKTTTVKTSSRRY</sequence>